<feature type="chain" id="PRO_0000149266" description="CMP-N-acetylneuraminate-beta-1,4-galactoside alpha-2,3-sialyltransferase">
    <location>
        <begin position="1"/>
        <end position="375"/>
    </location>
</feature>
<feature type="topological domain" description="Cytoplasmic" evidence="3">
    <location>
        <begin position="1"/>
        <end position="8"/>
    </location>
</feature>
<feature type="transmembrane region" description="Helical; Signal-anchor for type II membrane protein" evidence="3">
    <location>
        <begin position="9"/>
        <end position="28"/>
    </location>
</feature>
<feature type="topological domain" description="Lumenal" evidence="3">
    <location>
        <begin position="29"/>
        <end position="375"/>
    </location>
</feature>
<feature type="glycosylation site" description="N-linked (GlcNAc...) asparagine" evidence="3">
    <location>
        <position position="80"/>
    </location>
</feature>
<feature type="glycosylation site" description="N-linked (GlcNAc...) asparagine" evidence="3">
    <location>
        <position position="171"/>
    </location>
</feature>
<feature type="disulfide bond" evidence="1">
    <location>
        <begin position="160"/>
        <end position="314"/>
    </location>
</feature>
<feature type="splice variant" id="VSP_010595" description="In isoform E3+32." evidence="6">
    <original>NSVVLSFDSAGQTLGSEYDRLGFLLNLDSKLPAE</original>
    <variation>SSPSQHPCSWMTPFASGLESGSSCRLLGSKVKTI</variation>
    <location>
        <begin position="40"/>
        <end position="73"/>
    </location>
</feature>
<feature type="splice variant" id="VSP_010594" description="In isoform C1, isoform C4, isoform C5, isoform C7, isoform C8, isoform C9, isoform C11 and isoform C12." evidence="6 7">
    <original>NSVVLSFDSAGQTLGSE</original>
    <variation>K</variation>
    <location>
        <begin position="40"/>
        <end position="56"/>
    </location>
</feature>
<feature type="splice variant" id="VSP_010593" description="In isoform D5 and isoform D2+26." evidence="6 7">
    <original>NSVVLSFDSAGQTLGS</original>
    <variation>SKYSHSSSPQEKPVA</variation>
    <location>
        <begin position="40"/>
        <end position="55"/>
    </location>
</feature>
<feature type="splice variant" id="VSP_010592" description="In isoform E1." evidence="6">
    <original>NSVV</original>
    <variation>SLLN</variation>
    <location>
        <begin position="40"/>
        <end position="43"/>
    </location>
</feature>
<feature type="splice variant" id="VSP_010591" description="In isoform A1, isoform A7 and isoform A8." evidence="6">
    <original>N</original>
    <variation>SKYSHSSSPQEKPVAD</variation>
    <location>
        <position position="40"/>
    </location>
</feature>
<feature type="splice variant" id="VSP_010596" description="In isoform E1." evidence="6">
    <location>
        <begin position="44"/>
        <end position="375"/>
    </location>
</feature>
<feature type="splice variant" id="VSP_010597" description="In isoform A8, isoform B8 and isoform C8." evidence="6">
    <original>L</original>
    <variation>LSPRTLCTVVFGLDCILESPGEPKKLLMPASHPLEILKSLSEDTAFALGFLKLPR</variation>
    <location>
        <position position="70"/>
    </location>
</feature>
<feature type="splice variant" id="VSP_010598" description="In isoform B3 and isoform C11." evidence="6 7">
    <location>
        <begin position="71"/>
        <end position="101"/>
    </location>
</feature>
<feature type="splice variant" id="VSP_010599" description="In isoform E3+32." evidence="6">
    <location>
        <begin position="74"/>
        <end position="375"/>
    </location>
</feature>
<feature type="splice variant" id="VSP_010602" description="In isoform B5+173." evidence="6">
    <original>FSKPAPMFLDDSFRKWARIR</original>
    <variation>AKRNGAWRQKHIQAYVLRQR</variation>
    <location>
        <begin position="102"/>
        <end position="121"/>
    </location>
</feature>
<feature type="splice variant" id="VSP_010601" description="In isoform C12." evidence="7">
    <original>FSKPAPMFLDDSFRKW</original>
    <variation>PGRTISSERKSFCGSW</variation>
    <location>
        <begin position="102"/>
        <end position="117"/>
    </location>
</feature>
<feature type="splice variant" id="VSP_010600" description="In isoform B4+173." evidence="6">
    <original>FSKPAPMFLDDSFR</original>
    <variation>EKVRTFMAWLAWYG</variation>
    <location>
        <begin position="102"/>
        <end position="115"/>
    </location>
</feature>
<feature type="splice variant" id="VSP_010603" description="In isoform B4+173." evidence="6">
    <location>
        <begin position="116"/>
        <end position="375"/>
    </location>
</feature>
<feature type="splice variant" id="VSP_010604" description="In isoform C12." evidence="7">
    <location>
        <begin position="118"/>
        <end position="375"/>
    </location>
</feature>
<feature type="splice variant" id="VSP_010605" description="In isoform B5+173." evidence="6">
    <location>
        <begin position="122"/>
        <end position="375"/>
    </location>
</feature>
<feature type="splice variant" id="VSP_010607" description="In isoform A7, isoform B7 and isoform C7." evidence="6">
    <original>DNLIKAILSVTKEYRLTPALDSL</original>
    <variation>VLDAQYPARERVSAEAGESSRHH</variation>
    <location>
        <begin position="133"/>
        <end position="155"/>
    </location>
</feature>
<feature type="splice variant" id="VSP_010606" description="In isoform B10." evidence="7">
    <original>DNLIKAILSVTKEYRLTPA</original>
    <variation>ECIGWLLEICGHSSAQGAP</variation>
    <location>
        <begin position="133"/>
        <end position="151"/>
    </location>
</feature>
<feature type="splice variant" id="VSP_010608" description="In isoform B10." evidence="7">
    <location>
        <begin position="152"/>
        <end position="375"/>
    </location>
</feature>
<feature type="splice variant" id="VSP_010609" description="In isoform A7, isoform B7 and isoform C7." evidence="6">
    <location>
        <begin position="156"/>
        <end position="375"/>
    </location>
</feature>
<feature type="splice variant" id="VSP_010610" description="In isoform C5 and isoform D5." evidence="7">
    <original>RLNSAPVKGFEKDVGSK</original>
    <variation>SPGRTISSERKSFCGSW</variation>
    <location>
        <begin position="186"/>
        <end position="202"/>
    </location>
</feature>
<feature type="splice variant" id="VSP_010613" description="In isoform B5+26 and isoform D2+26." evidence="6">
    <location>
        <begin position="187"/>
        <end position="375"/>
    </location>
</feature>
<feature type="splice variant" id="VSP_010612" description="In isoform C9." evidence="7">
    <original>LNSAPVKGFEKDVGSKTTLRITYPEGAMQRPEQYERDSLFVLAGFKWQDFKWLKYIVY</original>
    <variation>VHRMASGNLWPLECPRSPLRFESSTHISSRRPPSPSLACPSTMASWAGGTSLPLAVWQ</variation>
    <location>
        <begin position="187"/>
        <end position="244"/>
    </location>
</feature>
<feature type="splice variant" id="VSP_010611" description="In isoform B1+32." evidence="6">
    <original>LNS</original>
    <variation>PRL</variation>
    <location>
        <begin position="187"/>
        <end position="189"/>
    </location>
</feature>
<feature type="splice variant" id="VSP_010614" description="In isoform B1+32." evidence="6">
    <location>
        <begin position="190"/>
        <end position="375"/>
    </location>
</feature>
<feature type="splice variant" id="VSP_010615" description="In isoform C5 and isoform D5." evidence="7">
    <location>
        <begin position="203"/>
        <end position="375"/>
    </location>
</feature>
<feature type="splice variant" id="VSP_010616" description="In isoform C9." evidence="7">
    <location>
        <begin position="245"/>
        <end position="375"/>
    </location>
</feature>
<feature type="splice variant" id="VSP_010618" description="In isoform B4, isoform C4 and isoform C11." evidence="6 7">
    <location>
        <begin position="249"/>
        <end position="346"/>
    </location>
</feature>
<feature type="splice variant" id="VSP_010617" description="In isoform B1-90." evidence="6">
    <location>
        <begin position="249"/>
        <end position="278"/>
    </location>
</feature>
<feature type="sequence variant" id="VAR_066594" description="In MRT12; most of the mutant protein is improperly localized to the endoplasmic reticulum preventing the protein from interacting with its substrates in the Golgi and resulting in a loss-of-function; dbSNP:rs387906943." evidence="4">
    <original>A</original>
    <variation>D</variation>
    <location>
        <position position="13"/>
    </location>
</feature>
<feature type="sequence variant" id="VAR_069319" description="In DEE15." evidence="5">
    <original>A</original>
    <variation>P</variation>
    <location>
        <position position="320"/>
    </location>
</feature>
<feature type="sequence variant" id="VAR_066595" description="In MRT12; the mutant protein is improperly localized to the endoplasmic reticulum preventing the protein from interacting with its substrates in the Golgi and resulting in a loss-of-function; shows a complete lack of enzyme activity; secretion of the mutant protein is dramatically reduced compared to wild-type." evidence="4">
    <original>D</original>
    <variation>Y</variation>
    <location>
        <position position="370"/>
    </location>
</feature>
<feature type="sequence conflict" description="In Ref. 3; AAO38806." evidence="8" ref="3">
    <original>D</original>
    <variation>N</variation>
    <location>
        <position position="38"/>
    </location>
</feature>
<feature type="sequence conflict" description="In Ref. 3; AAO38810." evidence="8" ref="3">
    <original>L</original>
    <variation>S</variation>
    <location>
        <position position="94"/>
    </location>
</feature>
<feature type="sequence conflict" description="In Ref. 3; AAO38810." evidence="8" ref="3">
    <original>F</original>
    <variation>L</variation>
    <location>
        <position position="123"/>
    </location>
</feature>
<feature type="sequence conflict" description="In Ref. 3; AAO38811." evidence="8" ref="3">
    <original>N</original>
    <variation>S</variation>
    <location>
        <position position="351"/>
    </location>
</feature>
<protein>
    <recommendedName>
        <fullName>CMP-N-acetylneuraminate-beta-1,4-galactoside alpha-2,3-sialyltransferase</fullName>
        <ecNumber evidence="2">2.4.3.6</ecNumber>
    </recommendedName>
    <alternativeName>
        <fullName>Beta-galactoside alpha-2,3-sialyltransferase 3</fullName>
        <shortName>Alpha 2,3-ST 3</shortName>
    </alternativeName>
    <alternativeName>
        <fullName>Gal beta-1,3(4) GlcNAc alpha-2,3 sialyltransferase</fullName>
    </alternativeName>
    <alternativeName>
        <fullName>N-acetyllactosaminide alpha-2,3-sialyltransferase</fullName>
    </alternativeName>
    <alternativeName>
        <fullName>ST3Gal III</fullName>
        <shortName>ST3GalIII</shortName>
    </alternativeName>
    <alternativeName>
        <fullName>ST3N</fullName>
    </alternativeName>
    <alternativeName>
        <fullName>Sialyltransferase 6</fullName>
    </alternativeName>
</protein>
<comment type="function">
    <text evidence="2">Catalyzes the formation of the NeuAc-alpha-2,3-Gal-beta-1,4-GlcNAc-, NeuAc-alpha-2,3-Gal-beta-1,3-GlcNAc- and NeuAc-alpha-2,3-Gal-beta-1,3-GalNAc- sequences found in terminal carbohydrate groups of glycoproteins and glycolipids. The highest activity is toward Gal-beta-1,3-GlcNAc and the lowest toward Gal-beta-1,3-GalNAc.</text>
</comment>
<comment type="catalytic activity">
    <reaction evidence="2">
        <text>a beta-D-galactosyl-(1-&gt;4)-N-acetyl-beta-D-glucosaminyl derivative + CMP-N-acetyl-beta-neuraminate = an N-acetyl-alpha-neuraminyl-(2-&gt;3)-beta-D-galactosyl-(1-&gt;4)-N-acetyl-beta-D-glucosaminyl derivative + CMP + H(+)</text>
        <dbReference type="Rhea" id="RHEA:52316"/>
        <dbReference type="ChEBI" id="CHEBI:15378"/>
        <dbReference type="ChEBI" id="CHEBI:57812"/>
        <dbReference type="ChEBI" id="CHEBI:60377"/>
        <dbReference type="ChEBI" id="CHEBI:133507"/>
        <dbReference type="ChEBI" id="CHEBI:136545"/>
        <dbReference type="EC" id="2.4.3.6"/>
    </reaction>
</comment>
<comment type="pathway">
    <text>Protein modification; protein glycosylation.</text>
</comment>
<comment type="interaction">
    <interactant intactId="EBI-717142">
        <id>Q11203</id>
    </interactant>
    <interactant intactId="EBI-21529239">
        <id>Q86TI2-2</id>
        <label>DPP9</label>
    </interactant>
    <organismsDiffer>false</organismsDiffer>
    <experiments>3</experiments>
</comment>
<comment type="interaction">
    <interactant intactId="EBI-717142">
        <id>Q11203</id>
    </interactant>
    <interactant intactId="EBI-6447163">
        <id>Q8N7X4</id>
        <label>MAGEB6</label>
    </interactant>
    <organismsDiffer>false</organismsDiffer>
    <experiments>3</experiments>
</comment>
<comment type="interaction">
    <interactant intactId="EBI-717142">
        <id>Q11203</id>
    </interactant>
    <interactant intactId="EBI-711626">
        <id>P50453</id>
        <label>SERPINB9</label>
    </interactant>
    <organismsDiffer>false</organismsDiffer>
    <experiments>2</experiments>
</comment>
<comment type="subcellular location">
    <subcellularLocation>
        <location>Golgi apparatus</location>
        <location>Golgi stack membrane</location>
        <topology>Single-pass type II membrane protein</topology>
    </subcellularLocation>
    <subcellularLocation>
        <location>Secreted</location>
    </subcellularLocation>
    <text>Membrane-bound form in trans cisternae of Golgi. Secreted into the body fluid.</text>
</comment>
<comment type="alternative products">
    <event type="alternative splicing"/>
    <isoform>
        <id>Q11203-1</id>
        <name>B1</name>
        <sequence type="displayed"/>
    </isoform>
    <isoform>
        <id>Q11203-2</id>
        <name>A1</name>
        <sequence type="described" ref="VSP_010591"/>
    </isoform>
    <isoform>
        <id>Q11203-3</id>
        <name>A7</name>
        <sequence type="described" ref="VSP_010591 VSP_010607 VSP_010609"/>
    </isoform>
    <isoform>
        <id>Q11203-4</id>
        <name>A8</name>
        <sequence type="described" ref="VSP_010591 VSP_010597"/>
    </isoform>
    <isoform>
        <id>Q11203-5</id>
        <name>B1-90</name>
        <sequence type="described" ref="VSP_010617"/>
    </isoform>
    <isoform>
        <id>Q11203-6</id>
        <name>B1+32</name>
        <sequence type="described" ref="VSP_010611 VSP_010614"/>
    </isoform>
    <isoform>
        <id>Q11203-7</id>
        <name>B3</name>
        <sequence type="described" ref="VSP_010598"/>
    </isoform>
    <isoform>
        <id>Q11203-8</id>
        <name>B4</name>
        <sequence type="described" ref="VSP_010618"/>
    </isoform>
    <isoform>
        <id>Q11203-9</id>
        <name>B4+173</name>
        <sequence type="described" ref="VSP_010600 VSP_010603"/>
    </isoform>
    <isoform>
        <id>Q11203-10</id>
        <name>B5+26</name>
        <sequence type="described" ref="VSP_010613"/>
    </isoform>
    <isoform>
        <id>Q11203-11</id>
        <name>B5+173</name>
        <sequence type="described" ref="VSP_010602 VSP_010605"/>
    </isoform>
    <isoform>
        <id>Q11203-12</id>
        <name>B7</name>
        <sequence type="described" ref="VSP_010607 VSP_010609"/>
    </isoform>
    <isoform>
        <id>Q11203-13</id>
        <name>B8</name>
        <sequence type="described" ref="VSP_010597"/>
    </isoform>
    <isoform>
        <id>Q11203-14</id>
        <name>B10</name>
        <sequence type="described" ref="VSP_010606 VSP_010608"/>
    </isoform>
    <isoform>
        <id>Q11203-15</id>
        <name>C1</name>
        <sequence type="described" ref="VSP_010594"/>
    </isoform>
    <isoform>
        <id>Q11203-16</id>
        <name>C4</name>
        <sequence type="described" ref="VSP_010594 VSP_010618"/>
    </isoform>
    <isoform>
        <id>Q11203-17</id>
        <name>C5</name>
        <sequence type="described" ref="VSP_010594 VSP_010610 VSP_010615"/>
    </isoform>
    <isoform>
        <id>Q11203-18</id>
        <name>C7</name>
        <sequence type="described" ref="VSP_010594 VSP_010607 VSP_010609"/>
    </isoform>
    <isoform>
        <id>Q11203-19</id>
        <name>C8</name>
        <sequence type="described" ref="VSP_010594 VSP_010597"/>
    </isoform>
    <isoform>
        <id>Q11203-20</id>
        <name>C9</name>
        <sequence type="described" ref="VSP_010594 VSP_010612 VSP_010616"/>
    </isoform>
    <isoform>
        <id>Q11203-21</id>
        <name>C11</name>
        <sequence type="described" ref="VSP_010594 VSP_010598 VSP_010618"/>
    </isoform>
    <isoform>
        <id>Q11203-22</id>
        <name>C12</name>
        <sequence type="described" ref="VSP_010594 VSP_010601 VSP_010604"/>
    </isoform>
    <isoform>
        <id>Q11203-23</id>
        <name>D2+26</name>
        <sequence type="described" ref="VSP_010593 VSP_010613"/>
    </isoform>
    <isoform>
        <id>Q11203-24</id>
        <name>D5</name>
        <sequence type="described" ref="VSP_010593 VSP_010610 VSP_010615"/>
    </isoform>
    <isoform>
        <id>Q11203-25</id>
        <name>E1</name>
        <sequence type="described" ref="VSP_010592 VSP_010596"/>
    </isoform>
    <isoform>
        <id>Q11203-26</id>
        <name>E3+32</name>
        <sequence type="described" ref="VSP_010595 VSP_010599"/>
    </isoform>
</comment>
<comment type="tissue specificity">
    <text>Highly expressed in adult skeletal muscle and in all fetal tissues examined and to a much lesser extent in placenta, lung and liver.</text>
</comment>
<comment type="PTM">
    <text>The soluble form derives from the membrane form by proteolytic processing.</text>
</comment>
<comment type="disease" evidence="4">
    <disease id="DI-03255">
        <name>Intellectual developmental disorder, autosomal recessive 12</name>
        <acronym>MRT12</acronym>
        <description>A disorder characterized by significantly below average general intellectual functioning associated with impairments in adaptive behavior and manifested during the developmental period.</description>
        <dbReference type="MIM" id="611090"/>
    </disease>
    <text>The disease is caused by variants affecting the gene represented in this entry.</text>
</comment>
<comment type="disease" evidence="5">
    <disease id="DI-03664">
        <name>Developmental and epileptic encephalopathy 15</name>
        <acronym>DEE15</acronym>
        <description>A form of epilepsy that manifests in the neonatal or the early infantile period as severely impaired cognitive and motor development, due to recurrent clinical seizures or prominent interictal epileptiform discharges. Patients develop infantile spasms, mainly of the flexor type, between 3 and 7 months of age, which are accompanied by hypsarrhythmia on EEG. Other features include poor eye contact, hypotonia, primitive reflexes, and irritability. Seizures evolve clinically to Lennox-Gastaut syndrome.</description>
        <dbReference type="MIM" id="615006"/>
    </disease>
    <text>The disease is caused by variants affecting the gene represented in this entry.</text>
</comment>
<comment type="miscellaneous">
    <molecule>Isoform B1+32</molecule>
    <text evidence="8">May be produced at very low levels due to a premature stop codon in the mRNA, leading to nonsense-mediated mRNA decay.</text>
</comment>
<comment type="miscellaneous">
    <molecule>Isoform B4+173</molecule>
    <text evidence="8">May be produced at very low levels due to a premature stop codon in the mRNA, leading to nonsense-mediated mRNA decay.</text>
</comment>
<comment type="miscellaneous">
    <molecule>Isoform B5+173</molecule>
    <text evidence="8">May be produced at very low levels due to a premature stop codon in the mRNA, leading to nonsense-mediated mRNA decay.</text>
</comment>
<comment type="miscellaneous">
    <molecule>Isoform B10</molecule>
    <text evidence="8">May be produced at very low levels due to a premature stop codon in the mRNA, leading to nonsense-mediated mRNA decay.</text>
</comment>
<comment type="miscellaneous">
    <molecule>Isoform C9</molecule>
    <text evidence="8">May be produced at very low levels due to a premature stop codon in the mRNA, leading to nonsense-mediated mRNA decay.</text>
</comment>
<comment type="miscellaneous">
    <molecule>Isoform E1</molecule>
    <text evidence="8">May be produced at very low levels due to a premature stop codon in the mRNA, leading to nonsense-mediated mRNA decay.</text>
</comment>
<comment type="miscellaneous">
    <molecule>Isoform E3+32</molecule>
    <text evidence="8">May be produced at very low levels due to a premature stop codon in the mRNA, leading to nonsense-mediated mRNA decay.</text>
</comment>
<comment type="similarity">
    <text evidence="8">Belongs to the glycosyltransferase 29 family.</text>
</comment>
<comment type="online information" name="Functional Glycomics Gateway - GTase">
    <link uri="http://www.functionalglycomics.org/glycomics/molecule/jsp/glycoEnzyme/viewGlycoEnzyme.jsp?gbpId=gt_hum_624"/>
    <text>ST3Gal III</text>
</comment>
<organism>
    <name type="scientific">Homo sapiens</name>
    <name type="common">Human</name>
    <dbReference type="NCBI Taxonomy" id="9606"/>
    <lineage>
        <taxon>Eukaryota</taxon>
        <taxon>Metazoa</taxon>
        <taxon>Chordata</taxon>
        <taxon>Craniata</taxon>
        <taxon>Vertebrata</taxon>
        <taxon>Euteleostomi</taxon>
        <taxon>Mammalia</taxon>
        <taxon>Eutheria</taxon>
        <taxon>Euarchontoglires</taxon>
        <taxon>Primates</taxon>
        <taxon>Haplorrhini</taxon>
        <taxon>Catarrhini</taxon>
        <taxon>Hominidae</taxon>
        <taxon>Homo</taxon>
    </lineage>
</organism>
<accession>Q11203</accession>
<accession>A9Z1W2</accession>
<accession>D3DPX8</accession>
<accession>Q5T4W9</accession>
<accession>Q5T4X0</accession>
<accession>Q5T4X7</accession>
<accession>Q5T4X8</accession>
<accession>Q5T4X9</accession>
<accession>Q5T4Y0</accession>
<accession>Q5T4Y2</accession>
<accession>Q5T4Y3</accession>
<accession>Q5T4Y4</accession>
<accession>Q86UR6</accession>
<accession>Q86UR7</accession>
<accession>Q86UR8</accession>
<accession>Q86UR9</accession>
<accession>Q86US0</accession>
<accession>Q86US1</accession>
<accession>Q86US2</accession>
<accession>Q8IX41</accession>
<accession>Q8IX42</accession>
<accession>Q8IX43</accession>
<accession>Q8IX44</accession>
<accession>Q8IX45</accession>
<accession>Q8IX46</accession>
<accession>Q8IX47</accession>
<accession>Q8IX48</accession>
<accession>Q8IX49</accession>
<accession>Q8IX50</accession>
<accession>Q8IX51</accession>
<accession>Q8IX52</accession>
<accession>Q8IX53</accession>
<accession>Q8IX54</accession>
<accession>Q8IX55</accession>
<accession>Q8IX56</accession>
<accession>Q8IX57</accession>
<accession>Q8IX58</accession>
<gene>
    <name type="primary">ST3GAL3</name>
    <name type="synonym">SIAT6</name>
</gene>
<proteinExistence type="evidence at protein level"/>
<sequence>MGLLVFVRNLLLALCLFLVLGFLYYSAWKLHLLQWEEDSNSVVLSFDSAGQTLGSEYDRLGFLLNLDSKLPAELATKYANFSEGACKPGYASALMTAIFPRFSKPAPMFLDDSFRKWARIREFVPPFGIKGQDNLIKAILSVTKEYRLTPALDSLRCRRCIIVGNGGVLANKSLGSRIDDYDIVVRLNSAPVKGFEKDVGSKTTLRITYPEGAMQRPEQYERDSLFVLAGFKWQDFKWLKYIVYKERVSASDGFWKSVATRVPKEPPEIRILNPYFIQEAAFTLIGLPFNNGLMGRGNIPTLGSVAVTMALHGCDEVAVAGFGYDMSTPNAPLHYYETVRMAAIKESWTHNIQREKEFLRKLVKARVITDLSSGI</sequence>
<dbReference type="EC" id="2.4.3.6" evidence="2"/>
<dbReference type="EMBL" id="L23768">
    <property type="protein sequence ID" value="AAA35778.1"/>
    <property type="molecule type" value="mRNA"/>
</dbReference>
<dbReference type="EMBL" id="AF425851">
    <property type="protein sequence ID" value="AAO13859.1"/>
    <property type="molecule type" value="mRNA"/>
</dbReference>
<dbReference type="EMBL" id="AF425852">
    <property type="protein sequence ID" value="AAO13860.1"/>
    <property type="molecule type" value="mRNA"/>
</dbReference>
<dbReference type="EMBL" id="AF425853">
    <property type="protein sequence ID" value="AAO13861.1"/>
    <property type="molecule type" value="mRNA"/>
</dbReference>
<dbReference type="EMBL" id="AF425854">
    <property type="protein sequence ID" value="AAO13862.1"/>
    <property type="molecule type" value="mRNA"/>
</dbReference>
<dbReference type="EMBL" id="AF425855">
    <property type="protein sequence ID" value="AAO13863.1"/>
    <property type="molecule type" value="mRNA"/>
</dbReference>
<dbReference type="EMBL" id="AF425856">
    <property type="protein sequence ID" value="AAO13864.1"/>
    <property type="molecule type" value="mRNA"/>
</dbReference>
<dbReference type="EMBL" id="AF425857">
    <property type="protein sequence ID" value="AAO13865.1"/>
    <property type="molecule type" value="mRNA"/>
</dbReference>
<dbReference type="EMBL" id="AF425858">
    <property type="protein sequence ID" value="AAO13866.1"/>
    <property type="molecule type" value="mRNA"/>
</dbReference>
<dbReference type="EMBL" id="AF425859">
    <property type="protein sequence ID" value="AAO13867.1"/>
    <property type="molecule type" value="mRNA"/>
</dbReference>
<dbReference type="EMBL" id="AF425860">
    <property type="protein sequence ID" value="AAO13868.1"/>
    <property type="molecule type" value="mRNA"/>
</dbReference>
<dbReference type="EMBL" id="AF425861">
    <property type="protein sequence ID" value="AAO13869.1"/>
    <property type="molecule type" value="mRNA"/>
</dbReference>
<dbReference type="EMBL" id="AF425862">
    <property type="protein sequence ID" value="AAO13870.1"/>
    <property type="molecule type" value="mRNA"/>
</dbReference>
<dbReference type="EMBL" id="AF425863">
    <property type="protein sequence ID" value="AAO13871.1"/>
    <property type="molecule type" value="mRNA"/>
</dbReference>
<dbReference type="EMBL" id="AF425864">
    <property type="protein sequence ID" value="AAO13872.1"/>
    <property type="molecule type" value="mRNA"/>
</dbReference>
<dbReference type="EMBL" id="AF425865">
    <property type="protein sequence ID" value="AAO13873.1"/>
    <property type="molecule type" value="mRNA"/>
</dbReference>
<dbReference type="EMBL" id="AF425866">
    <property type="protein sequence ID" value="AAO13874.1"/>
    <property type="molecule type" value="mRNA"/>
</dbReference>
<dbReference type="EMBL" id="AF425867">
    <property type="protein sequence ID" value="AAO13875.1"/>
    <property type="molecule type" value="mRNA"/>
</dbReference>
<dbReference type="EMBL" id="AF425868">
    <property type="protein sequence ID" value="AAO13876.1"/>
    <property type="molecule type" value="mRNA"/>
</dbReference>
<dbReference type="EMBL" id="AF425869">
    <property type="protein sequence ID" value="AAO13877.1"/>
    <property type="molecule type" value="mRNA"/>
</dbReference>
<dbReference type="EMBL" id="AY167992">
    <property type="protein sequence ID" value="AAO38806.1"/>
    <property type="molecule type" value="mRNA"/>
</dbReference>
<dbReference type="EMBL" id="AY167993">
    <property type="protein sequence ID" value="AAO38807.1"/>
    <property type="molecule type" value="mRNA"/>
</dbReference>
<dbReference type="EMBL" id="AY167994">
    <property type="protein sequence ID" value="AAO38808.1"/>
    <property type="molecule type" value="mRNA"/>
</dbReference>
<dbReference type="EMBL" id="AY167995">
    <property type="protein sequence ID" value="AAO38809.1"/>
    <property type="molecule type" value="mRNA"/>
</dbReference>
<dbReference type="EMBL" id="AY167996">
    <property type="protein sequence ID" value="AAO38810.1"/>
    <property type="molecule type" value="mRNA"/>
</dbReference>
<dbReference type="EMBL" id="AY167997">
    <property type="protein sequence ID" value="AAO38811.1"/>
    <property type="molecule type" value="mRNA"/>
</dbReference>
<dbReference type="EMBL" id="AY167998">
    <property type="protein sequence ID" value="AAO38812.1"/>
    <property type="molecule type" value="mRNA"/>
</dbReference>
<dbReference type="EMBL" id="AL357079">
    <property type="status" value="NOT_ANNOTATED_CDS"/>
    <property type="molecule type" value="Genomic_DNA"/>
</dbReference>
<dbReference type="EMBL" id="AL451062">
    <property type="status" value="NOT_ANNOTATED_CDS"/>
    <property type="molecule type" value="Genomic_DNA"/>
</dbReference>
<dbReference type="EMBL" id="AL592548">
    <property type="status" value="NOT_ANNOTATED_CDS"/>
    <property type="molecule type" value="Genomic_DNA"/>
</dbReference>
<dbReference type="EMBL" id="CH471059">
    <property type="protein sequence ID" value="EAX07082.1"/>
    <property type="molecule type" value="Genomic_DNA"/>
</dbReference>
<dbReference type="EMBL" id="CH471059">
    <property type="protein sequence ID" value="EAX07083.1"/>
    <property type="molecule type" value="Genomic_DNA"/>
</dbReference>
<dbReference type="EMBL" id="BC050380">
    <property type="protein sequence ID" value="AAH50380.1"/>
    <property type="molecule type" value="mRNA"/>
</dbReference>
<dbReference type="CCDS" id="CCDS492.1">
    <molecule id="Q11203-1"/>
</dbReference>
<dbReference type="CCDS" id="CCDS493.1">
    <molecule id="Q11203-4"/>
</dbReference>
<dbReference type="CCDS" id="CCDS494.1">
    <molecule id="Q11203-2"/>
</dbReference>
<dbReference type="CCDS" id="CCDS495.1">
    <molecule id="Q11203-8"/>
</dbReference>
<dbReference type="CCDS" id="CCDS496.1">
    <molecule id="Q11203-13"/>
</dbReference>
<dbReference type="CCDS" id="CCDS497.1">
    <molecule id="Q11203-15"/>
</dbReference>
<dbReference type="CCDS" id="CCDS498.1">
    <molecule id="Q11203-19"/>
</dbReference>
<dbReference type="CCDS" id="CCDS499.1">
    <molecule id="Q11203-3"/>
</dbReference>
<dbReference type="CCDS" id="CCDS500.1">
    <molecule id="Q11203-12"/>
</dbReference>
<dbReference type="CCDS" id="CCDS53310.1">
    <molecule id="Q11203-18"/>
</dbReference>
<dbReference type="CCDS" id="CCDS57988.1">
    <molecule id="Q11203-5"/>
</dbReference>
<dbReference type="CCDS" id="CCDS57989.1">
    <molecule id="Q11203-7"/>
</dbReference>
<dbReference type="CCDS" id="CCDS57990.1">
    <molecule id="Q11203-16"/>
</dbReference>
<dbReference type="CCDS" id="CCDS57991.1">
    <molecule id="Q11203-17"/>
</dbReference>
<dbReference type="CCDS" id="CCDS57992.1">
    <molecule id="Q11203-22"/>
</dbReference>
<dbReference type="CCDS" id="CCDS57993.1">
    <molecule id="Q11203-24"/>
</dbReference>
<dbReference type="CCDS" id="CCDS57994.1">
    <molecule id="Q11203-23"/>
</dbReference>
<dbReference type="CCDS" id="CCDS85964.1">
    <molecule id="Q11203-21"/>
</dbReference>
<dbReference type="PIR" id="JN0618">
    <property type="entry name" value="JN0618"/>
</dbReference>
<dbReference type="RefSeq" id="NP_001257388.1">
    <molecule id="Q11203-5"/>
    <property type="nucleotide sequence ID" value="NM_001270459.2"/>
</dbReference>
<dbReference type="RefSeq" id="NP_001257389.1">
    <molecule id="Q11203-7"/>
    <property type="nucleotide sequence ID" value="NM_001270460.2"/>
</dbReference>
<dbReference type="RefSeq" id="NP_001257390.1">
    <molecule id="Q11203-16"/>
    <property type="nucleotide sequence ID" value="NM_001270461.3"/>
</dbReference>
<dbReference type="RefSeq" id="NP_001257391.1">
    <molecule id="Q11203-21"/>
    <property type="nucleotide sequence ID" value="NM_001270462.3"/>
</dbReference>
<dbReference type="RefSeq" id="NP_001257392.1">
    <molecule id="Q11203-24"/>
    <property type="nucleotide sequence ID" value="NM_001270463.3"/>
</dbReference>
<dbReference type="RefSeq" id="NP_001257393.1">
    <molecule id="Q11203-17"/>
    <property type="nucleotide sequence ID" value="NM_001270464.3"/>
</dbReference>
<dbReference type="RefSeq" id="NP_001257394.1">
    <molecule id="Q11203-23"/>
    <property type="nucleotide sequence ID" value="NM_001270465.3"/>
</dbReference>
<dbReference type="RefSeq" id="NP_001257395.1">
    <molecule id="Q11203-22"/>
    <property type="nucleotide sequence ID" value="NM_001270466.3"/>
</dbReference>
<dbReference type="RefSeq" id="NP_006270.1">
    <molecule id="Q11203-1"/>
    <property type="nucleotide sequence ID" value="NM_006279.5"/>
</dbReference>
<dbReference type="RefSeq" id="NP_777623.2">
    <molecule id="Q11203-4"/>
    <property type="nucleotide sequence ID" value="NM_174963.5"/>
</dbReference>
<dbReference type="RefSeq" id="NP_777624.1">
    <molecule id="Q11203-2"/>
    <property type="nucleotide sequence ID" value="NM_174964.4"/>
</dbReference>
<dbReference type="RefSeq" id="NP_777625.1">
    <molecule id="Q11203-3"/>
    <property type="nucleotide sequence ID" value="NM_174965.4"/>
</dbReference>
<dbReference type="RefSeq" id="NP_777626.1">
    <molecule id="Q11203-8"/>
    <property type="nucleotide sequence ID" value="NM_174966.4"/>
</dbReference>
<dbReference type="RefSeq" id="NP_777627.1">
    <molecule id="Q11203-12"/>
    <property type="nucleotide sequence ID" value="NM_174967.4"/>
</dbReference>
<dbReference type="RefSeq" id="NP_777628.2">
    <molecule id="Q11203-13"/>
    <property type="nucleotide sequence ID" value="NM_174968.5"/>
</dbReference>
<dbReference type="RefSeq" id="NP_777629.1">
    <molecule id="Q11203-15"/>
    <property type="nucleotide sequence ID" value="NM_174969.4"/>
</dbReference>
<dbReference type="RefSeq" id="NP_777630.1">
    <molecule id="Q11203-18"/>
    <property type="nucleotide sequence ID" value="NM_174970.4"/>
</dbReference>
<dbReference type="RefSeq" id="NP_777631.2">
    <molecule id="Q11203-19"/>
    <property type="nucleotide sequence ID" value="NM_174971.5"/>
</dbReference>
<dbReference type="RefSeq" id="XP_016857602.1">
    <molecule id="Q11203-1"/>
    <property type="nucleotide sequence ID" value="XM_017002113.2"/>
</dbReference>
<dbReference type="RefSeq" id="XP_047284177.1">
    <molecule id="Q11203-1"/>
    <property type="nucleotide sequence ID" value="XM_047428221.1"/>
</dbReference>
<dbReference type="RefSeq" id="XP_047284188.1">
    <molecule id="Q11203-15"/>
    <property type="nucleotide sequence ID" value="XM_047428232.1"/>
</dbReference>
<dbReference type="RefSeq" id="XP_054194299.1">
    <molecule id="Q11203-1"/>
    <property type="nucleotide sequence ID" value="XM_054338324.1"/>
</dbReference>
<dbReference type="RefSeq" id="XP_054194300.1">
    <molecule id="Q11203-1"/>
    <property type="nucleotide sequence ID" value="XM_054338325.1"/>
</dbReference>
<dbReference type="RefSeq" id="XP_054194301.1">
    <molecule id="Q11203-15"/>
    <property type="nucleotide sequence ID" value="XM_054338326.1"/>
</dbReference>
<dbReference type="SMR" id="Q11203"/>
<dbReference type="BioGRID" id="112379">
    <property type="interactions" value="19"/>
</dbReference>
<dbReference type="FunCoup" id="Q11203">
    <property type="interactions" value="351"/>
</dbReference>
<dbReference type="IntAct" id="Q11203">
    <property type="interactions" value="19"/>
</dbReference>
<dbReference type="STRING" id="9606.ENSP00000493823"/>
<dbReference type="ChEMBL" id="CHEMBL3596076"/>
<dbReference type="CAZy" id="GT29">
    <property type="family name" value="Glycosyltransferase Family 29"/>
</dbReference>
<dbReference type="GlyCosmos" id="Q11203">
    <property type="glycosylation" value="2 sites, No reported glycans"/>
</dbReference>
<dbReference type="GlyGen" id="Q11203">
    <property type="glycosylation" value="3 sites, 2 N-linked glycans (2 sites), 1 O-linked glycan (1 site)"/>
</dbReference>
<dbReference type="iPTMnet" id="Q11203"/>
<dbReference type="PhosphoSitePlus" id="Q11203"/>
<dbReference type="BioMuta" id="ST3GAL3"/>
<dbReference type="DMDM" id="1705561"/>
<dbReference type="jPOST" id="Q11203"/>
<dbReference type="MassIVE" id="Q11203"/>
<dbReference type="PeptideAtlas" id="Q11203"/>
<dbReference type="ProteomicsDB" id="58874">
    <molecule id="Q11203-1"/>
</dbReference>
<dbReference type="ProteomicsDB" id="58876">
    <molecule id="Q11203-11"/>
</dbReference>
<dbReference type="ProteomicsDB" id="58878">
    <molecule id="Q11203-13"/>
</dbReference>
<dbReference type="ProteomicsDB" id="58880">
    <molecule id="Q11203-15"/>
</dbReference>
<dbReference type="ProteomicsDB" id="58881">
    <molecule id="Q11203-16"/>
</dbReference>
<dbReference type="ProteomicsDB" id="58884">
    <molecule id="Q11203-19"/>
</dbReference>
<dbReference type="ProteomicsDB" id="58885">
    <molecule id="Q11203-2"/>
</dbReference>
<dbReference type="ProteomicsDB" id="58887">
    <molecule id="Q11203-21"/>
</dbReference>
<dbReference type="ProteomicsDB" id="58894">
    <molecule id="Q11203-4"/>
</dbReference>
<dbReference type="ProteomicsDB" id="58895">
    <molecule id="Q11203-5"/>
</dbReference>
<dbReference type="ProteomicsDB" id="58897">
    <molecule id="Q11203-7"/>
</dbReference>
<dbReference type="ProteomicsDB" id="58898">
    <molecule id="Q11203-8"/>
</dbReference>
<dbReference type="Antibodypedia" id="32385">
    <property type="antibodies" value="168 antibodies from 26 providers"/>
</dbReference>
<dbReference type="DNASU" id="6487"/>
<dbReference type="Ensembl" id="ENST00000262915.8">
    <molecule id="Q11203-4"/>
    <property type="protein sequence ID" value="ENSP00000262915.3"/>
    <property type="gene ID" value="ENSG00000126091.21"/>
</dbReference>
<dbReference type="Ensembl" id="ENST00000330208.6">
    <molecule id="Q11203-22"/>
    <property type="protein sequence ID" value="ENSP00000333494.3"/>
    <property type="gene ID" value="ENSG00000126091.21"/>
</dbReference>
<dbReference type="Ensembl" id="ENST00000335430.10">
    <molecule id="Q11203-23"/>
    <property type="protein sequence ID" value="ENSP00000335633.7"/>
    <property type="gene ID" value="ENSG00000126091.21"/>
</dbReference>
<dbReference type="Ensembl" id="ENST00000347631.8">
    <molecule id="Q11203-1"/>
    <property type="protein sequence ID" value="ENSP00000317192.6"/>
    <property type="gene ID" value="ENSG00000126091.21"/>
</dbReference>
<dbReference type="Ensembl" id="ENST00000351035.8">
    <molecule id="Q11203-13"/>
    <property type="protein sequence ID" value="ENSP00000316999.6"/>
    <property type="gene ID" value="ENSG00000126091.21"/>
</dbReference>
<dbReference type="Ensembl" id="ENST00000353126.8">
    <molecule id="Q11203-8"/>
    <property type="protein sequence ID" value="ENSP00000330463.3"/>
    <property type="gene ID" value="ENSG00000126091.21"/>
</dbReference>
<dbReference type="Ensembl" id="ENST00000361392.9">
    <molecule id="Q11203-2"/>
    <property type="protein sequence ID" value="ENSP00000355341.5"/>
    <property type="gene ID" value="ENSG00000126091.21"/>
</dbReference>
<dbReference type="Ensembl" id="ENST00000361400.9">
    <molecule id="Q11203-15"/>
    <property type="protein sequence ID" value="ENSP00000354748.4"/>
    <property type="gene ID" value="ENSG00000126091.21"/>
</dbReference>
<dbReference type="Ensembl" id="ENST00000361812.9">
    <molecule id="Q11203-3"/>
    <property type="protein sequence ID" value="ENSP00000355201.4"/>
    <property type="gene ID" value="ENSG00000126091.21"/>
</dbReference>
<dbReference type="Ensembl" id="ENST00000372362.6">
    <molecule id="Q11203-12"/>
    <property type="protein sequence ID" value="ENSP00000361437.2"/>
    <property type="gene ID" value="ENSG00000126091.21"/>
</dbReference>
<dbReference type="Ensembl" id="ENST00000372365.5">
    <molecule id="Q11203-10"/>
    <property type="protein sequence ID" value="ENSP00000361440.1"/>
    <property type="gene ID" value="ENSG00000126091.21"/>
</dbReference>
<dbReference type="Ensembl" id="ENST00000372366.6">
    <molecule id="Q11203-23"/>
    <property type="protein sequence ID" value="ENSP00000361441.1"/>
    <property type="gene ID" value="ENSG00000126091.21"/>
</dbReference>
<dbReference type="Ensembl" id="ENST00000372367.5">
    <molecule id="Q11203-24"/>
    <property type="protein sequence ID" value="ENSP00000361442.1"/>
    <property type="gene ID" value="ENSG00000126091.21"/>
</dbReference>
<dbReference type="Ensembl" id="ENST00000372369.5">
    <molecule id="Q11203-5"/>
    <property type="protein sequence ID" value="ENSP00000361444.1"/>
    <property type="gene ID" value="ENSG00000126091.21"/>
</dbReference>
<dbReference type="Ensembl" id="ENST00000372372.7">
    <molecule id="Q11203-19"/>
    <property type="protein sequence ID" value="ENSP00000361447.2"/>
    <property type="gene ID" value="ENSG00000126091.21"/>
</dbReference>
<dbReference type="Ensembl" id="ENST00000372374.7">
    <molecule id="Q11203-7"/>
    <property type="protein sequence ID" value="ENSP00000361449.2"/>
    <property type="gene ID" value="ENSG00000126091.21"/>
</dbReference>
<dbReference type="Ensembl" id="ENST00000469715.6">
    <molecule id="Q11203-26"/>
    <property type="protein sequence ID" value="ENSP00000431700.2"/>
    <property type="gene ID" value="ENSG00000126091.21"/>
</dbReference>
<dbReference type="Ensembl" id="ENST00000489897.6">
    <molecule id="Q11203-11"/>
    <property type="protein sequence ID" value="ENSP00000437206.1"/>
    <property type="gene ID" value="ENSG00000126091.21"/>
</dbReference>
<dbReference type="Ensembl" id="ENST00000490541.6">
    <molecule id="Q11203-25"/>
    <property type="protein sequence ID" value="ENSP00000435018.2"/>
    <property type="gene ID" value="ENSG00000126091.21"/>
</dbReference>
<dbReference type="Ensembl" id="ENST00000528371.5">
    <molecule id="Q11203-17"/>
    <property type="protein sequence ID" value="ENSP00000434876.1"/>
    <property type="gene ID" value="ENSG00000126091.21"/>
</dbReference>
<dbReference type="Ensembl" id="ENST00000530581.5">
    <molecule id="Q11203-20"/>
    <property type="protein sequence ID" value="ENSP00000437293.1"/>
    <property type="gene ID" value="ENSG00000126091.21"/>
</dbReference>
<dbReference type="Ensembl" id="ENST00000531451.5">
    <molecule id="Q11203-18"/>
    <property type="protein sequence ID" value="ENSP00000435603.1"/>
    <property type="gene ID" value="ENSG00000126091.21"/>
</dbReference>
<dbReference type="Ensembl" id="ENST00000531816.1">
    <molecule id="Q11203-22"/>
    <property type="protein sequence ID" value="ENSP00000434378.1"/>
    <property type="gene ID" value="ENSG00000126091.21"/>
</dbReference>
<dbReference type="Ensembl" id="ENST00000531993.6">
    <molecule id="Q11203-21"/>
    <property type="protein sequence ID" value="ENSP00000432682.2"/>
    <property type="gene ID" value="ENSG00000126091.21"/>
</dbReference>
<dbReference type="Ensembl" id="ENST00000533212.5">
    <molecule id="Q11203-14"/>
    <property type="protein sequence ID" value="ENSP00000435621.1"/>
    <property type="gene ID" value="ENSG00000126091.21"/>
</dbReference>
<dbReference type="Ensembl" id="ENST00000533997.6">
    <molecule id="Q11203-9"/>
    <property type="protein sequence ID" value="ENSP00000432071.1"/>
    <property type="gene ID" value="ENSG00000126091.21"/>
</dbReference>
<dbReference type="Ensembl" id="ENST00000545417.5">
    <molecule id="Q11203-3"/>
    <property type="protein sequence ID" value="ENSP00000439634.1"/>
    <property type="gene ID" value="ENSG00000126091.21"/>
</dbReference>
<dbReference type="Ensembl" id="ENST00000642504.1">
    <molecule id="Q11203-9"/>
    <property type="protein sequence ID" value="ENSP00000494857.1"/>
    <property type="gene ID" value="ENSG00000126091.21"/>
</dbReference>
<dbReference type="Ensembl" id="ENST00000642934.1">
    <molecule id="Q11203-16"/>
    <property type="protein sequence ID" value="ENSP00000494146.1"/>
    <property type="gene ID" value="ENSG00000126091.21"/>
</dbReference>
<dbReference type="Ensembl" id="ENST00000642949.1">
    <molecule id="Q11203-6"/>
    <property type="protein sequence ID" value="ENSP00000495709.1"/>
    <property type="gene ID" value="ENSG00000126091.21"/>
</dbReference>
<dbReference type="Ensembl" id="ENST00000644195.1">
    <molecule id="Q11203-1"/>
    <property type="protein sequence ID" value="ENSP00000494201.1"/>
    <property type="gene ID" value="ENSG00000126091.21"/>
</dbReference>
<dbReference type="Ensembl" id="ENST00000645142.1">
    <molecule id="Q11203-6"/>
    <property type="protein sequence ID" value="ENSP00000496550.1"/>
    <property type="gene ID" value="ENSG00000126091.21"/>
</dbReference>
<dbReference type="Ensembl" id="ENST00000645165.1">
    <molecule id="Q11203-11"/>
    <property type="protein sequence ID" value="ENSP00000493660.1"/>
    <property type="gene ID" value="ENSG00000126091.21"/>
</dbReference>
<dbReference type="Ensembl" id="ENST00000645640.1">
    <molecule id="Q11203-11"/>
    <property type="protein sequence ID" value="ENSP00000494852.1"/>
    <property type="gene ID" value="ENSG00000126091.21"/>
</dbReference>
<dbReference type="Ensembl" id="ENST00000646971.1">
    <molecule id="Q11203-1"/>
    <property type="protein sequence ID" value="ENSP00000495887.1"/>
    <property type="gene ID" value="ENSG00000126091.21"/>
</dbReference>
<dbReference type="GeneID" id="6487"/>
<dbReference type="KEGG" id="hsa:6487"/>
<dbReference type="MANE-Select" id="ENST00000347631.8">
    <property type="protein sequence ID" value="ENSP00000317192.6"/>
    <property type="RefSeq nucleotide sequence ID" value="NM_006279.5"/>
    <property type="RefSeq protein sequence ID" value="NP_006270.1"/>
</dbReference>
<dbReference type="UCSC" id="uc001cjz.5">
    <molecule id="Q11203-1"/>
    <property type="organism name" value="human"/>
</dbReference>
<dbReference type="AGR" id="HGNC:10866"/>
<dbReference type="CTD" id="6487"/>
<dbReference type="DisGeNET" id="6487"/>
<dbReference type="GeneCards" id="ST3GAL3"/>
<dbReference type="HGNC" id="HGNC:10866">
    <property type="gene designation" value="ST3GAL3"/>
</dbReference>
<dbReference type="HPA" id="ENSG00000126091">
    <property type="expression patterns" value="Tissue enhanced (skeletal muscle, tongue)"/>
</dbReference>
<dbReference type="MalaCards" id="ST3GAL3"/>
<dbReference type="MIM" id="606494">
    <property type="type" value="gene"/>
</dbReference>
<dbReference type="MIM" id="611090">
    <property type="type" value="phenotype"/>
</dbReference>
<dbReference type="MIM" id="615006">
    <property type="type" value="phenotype"/>
</dbReference>
<dbReference type="neXtProt" id="NX_Q11203"/>
<dbReference type="OpenTargets" id="ENSG00000126091"/>
<dbReference type="Orphanet" id="88616">
    <property type="disease" value="Autosomal recessive non-syndromic intellectual disability"/>
</dbReference>
<dbReference type="Orphanet" id="3451">
    <property type="disease" value="Infantile epileptic spasms syndrome"/>
</dbReference>
<dbReference type="PharmGKB" id="PA35768"/>
<dbReference type="VEuPathDB" id="HostDB:ENSG00000126091"/>
<dbReference type="GeneTree" id="ENSGT00940000157285"/>
<dbReference type="HOGENOM" id="CLU_032020_3_0_1"/>
<dbReference type="InParanoid" id="Q11203"/>
<dbReference type="OMA" id="FQWEDSS"/>
<dbReference type="OrthoDB" id="10264956at2759"/>
<dbReference type="PAN-GO" id="Q11203">
    <property type="GO annotations" value="2 GO annotations based on evolutionary models"/>
</dbReference>
<dbReference type="PhylomeDB" id="Q11203"/>
<dbReference type="TreeFam" id="TF354325"/>
<dbReference type="BioCyc" id="MetaCyc:HS04994-MONOMER"/>
<dbReference type="BRENDA" id="2.4.99.2">
    <property type="organism ID" value="2681"/>
</dbReference>
<dbReference type="BRENDA" id="2.4.99.6">
    <property type="organism ID" value="2681"/>
</dbReference>
<dbReference type="PathwayCommons" id="Q11203"/>
<dbReference type="Reactome" id="R-HSA-1912420">
    <property type="pathway name" value="Pre-NOTCH Processing in Golgi"/>
</dbReference>
<dbReference type="Reactome" id="R-HSA-2022854">
    <property type="pathway name" value="Keratan sulfate biosynthesis"/>
</dbReference>
<dbReference type="Reactome" id="R-HSA-3656243">
    <property type="pathway name" value="Defective ST3GAL3 causes MCT12 and EIEE15"/>
</dbReference>
<dbReference type="Reactome" id="R-HSA-4085001">
    <property type="pathway name" value="Sialic acid metabolism"/>
</dbReference>
<dbReference type="Reactome" id="R-HSA-9037629">
    <property type="pathway name" value="Lewis blood group biosynthesis"/>
</dbReference>
<dbReference type="Reactome" id="R-HSA-9683673">
    <property type="pathway name" value="Maturation of protein 3a"/>
</dbReference>
<dbReference type="Reactome" id="R-HSA-9694548">
    <property type="pathway name" value="Maturation of spike protein"/>
</dbReference>
<dbReference type="Reactome" id="R-HSA-9694719">
    <property type="pathway name" value="Maturation of protein 3a"/>
</dbReference>
<dbReference type="Reactome" id="R-HSA-977068">
    <property type="pathway name" value="Termination of O-glycan biosynthesis"/>
</dbReference>
<dbReference type="Reactome" id="R-HSA-9840309">
    <property type="pathway name" value="Glycosphingolipid biosynthesis"/>
</dbReference>
<dbReference type="SignaLink" id="Q11203"/>
<dbReference type="SIGNOR" id="Q11203"/>
<dbReference type="UniPathway" id="UPA00378"/>
<dbReference type="BioGRID-ORCS" id="6487">
    <property type="hits" value="13 hits in 1150 CRISPR screens"/>
</dbReference>
<dbReference type="ChiTaRS" id="ST3GAL3">
    <property type="organism name" value="human"/>
</dbReference>
<dbReference type="GeneWiki" id="ST3GAL3"/>
<dbReference type="GenomeRNAi" id="6487"/>
<dbReference type="Pharos" id="Q11203">
    <property type="development level" value="Tbio"/>
</dbReference>
<dbReference type="PRO" id="PR:Q11203"/>
<dbReference type="Proteomes" id="UP000005640">
    <property type="component" value="Chromosome 1"/>
</dbReference>
<dbReference type="RNAct" id="Q11203">
    <property type="molecule type" value="protein"/>
</dbReference>
<dbReference type="Bgee" id="ENSG00000126091">
    <property type="expression patterns" value="Expressed in hindlimb stylopod muscle and 117 other cell types or tissues"/>
</dbReference>
<dbReference type="ExpressionAtlas" id="Q11203">
    <property type="expression patterns" value="baseline and differential"/>
</dbReference>
<dbReference type="GO" id="GO:0005576">
    <property type="term" value="C:extracellular region"/>
    <property type="evidence" value="ECO:0007669"/>
    <property type="project" value="UniProtKB-SubCell"/>
</dbReference>
<dbReference type="GO" id="GO:0032580">
    <property type="term" value="C:Golgi cisterna membrane"/>
    <property type="evidence" value="ECO:0007669"/>
    <property type="project" value="UniProtKB-SubCell"/>
</dbReference>
<dbReference type="GO" id="GO:0000139">
    <property type="term" value="C:Golgi membrane"/>
    <property type="evidence" value="ECO:0000304"/>
    <property type="project" value="Reactome"/>
</dbReference>
<dbReference type="GO" id="GO:0003836">
    <property type="term" value="F:beta-galactoside (CMP) alpha-2,3-sialyltransferase activity"/>
    <property type="evidence" value="ECO:0000304"/>
    <property type="project" value="Reactome"/>
</dbReference>
<dbReference type="GO" id="GO:0008118">
    <property type="term" value="F:N-acetyllactosaminide alpha-2,3-sialyltransferase activity"/>
    <property type="evidence" value="ECO:0000304"/>
    <property type="project" value="ProtInc"/>
</dbReference>
<dbReference type="GO" id="GO:0008373">
    <property type="term" value="F:sialyltransferase activity"/>
    <property type="evidence" value="ECO:0000318"/>
    <property type="project" value="GO_Central"/>
</dbReference>
<dbReference type="GO" id="GO:0010706">
    <property type="term" value="P:ganglioside biosynthetic process via lactosylceramide"/>
    <property type="evidence" value="ECO:0007669"/>
    <property type="project" value="Ensembl"/>
</dbReference>
<dbReference type="GO" id="GO:0006688">
    <property type="term" value="P:glycosphingolipid biosynthetic process"/>
    <property type="evidence" value="ECO:0000304"/>
    <property type="project" value="Reactome"/>
</dbReference>
<dbReference type="GO" id="GO:0018146">
    <property type="term" value="P:keratan sulfate proteoglycan biosynthetic process"/>
    <property type="evidence" value="ECO:0000304"/>
    <property type="project" value="Reactome"/>
</dbReference>
<dbReference type="GO" id="GO:0016266">
    <property type="term" value="P:O-glycan processing"/>
    <property type="evidence" value="ECO:0000304"/>
    <property type="project" value="Reactome"/>
</dbReference>
<dbReference type="GO" id="GO:0009312">
    <property type="term" value="P:oligosaccharide biosynthetic process"/>
    <property type="evidence" value="ECO:0000304"/>
    <property type="project" value="Reactome"/>
</dbReference>
<dbReference type="GO" id="GO:0006486">
    <property type="term" value="P:protein glycosylation"/>
    <property type="evidence" value="ECO:0000318"/>
    <property type="project" value="GO_Central"/>
</dbReference>
<dbReference type="GO" id="GO:0019082">
    <property type="term" value="P:viral protein processing"/>
    <property type="evidence" value="ECO:0000304"/>
    <property type="project" value="Reactome"/>
</dbReference>
<dbReference type="CDD" id="cd23981">
    <property type="entry name" value="GT29_ST3GAL3"/>
    <property type="match status" value="1"/>
</dbReference>
<dbReference type="FunFam" id="3.90.1480.20:FF:000003">
    <property type="entry name" value="CMP-N-acetylneuraminate-beta-1,4-galactoside alpha-2,3-sialyltransferase isoform X1"/>
    <property type="match status" value="1"/>
</dbReference>
<dbReference type="Gene3D" id="3.90.1480.20">
    <property type="entry name" value="Glycosyl transferase family 29"/>
    <property type="match status" value="1"/>
</dbReference>
<dbReference type="InterPro" id="IPR001675">
    <property type="entry name" value="Glyco_trans_29"/>
</dbReference>
<dbReference type="InterPro" id="IPR051142">
    <property type="entry name" value="Glycosyltransferase_29"/>
</dbReference>
<dbReference type="InterPro" id="IPR038578">
    <property type="entry name" value="GT29-like_sf"/>
</dbReference>
<dbReference type="InterPro" id="IPR012163">
    <property type="entry name" value="Sialyl_trans"/>
</dbReference>
<dbReference type="PANTHER" id="PTHR13713:SF37">
    <property type="entry name" value="CMP-N-ACETYLNEURAMINATE-BETA-1,4-GALACTOSIDE ALPHA-2,3-SIALYLTRANSFERASE"/>
    <property type="match status" value="1"/>
</dbReference>
<dbReference type="PANTHER" id="PTHR13713">
    <property type="entry name" value="SIALYLTRANSFERASE"/>
    <property type="match status" value="1"/>
</dbReference>
<dbReference type="Pfam" id="PF00777">
    <property type="entry name" value="Glyco_transf_29"/>
    <property type="match status" value="1"/>
</dbReference>
<dbReference type="PIRSF" id="PIRSF005557">
    <property type="entry name" value="Sialyl_trans"/>
    <property type="match status" value="1"/>
</dbReference>
<keyword id="KW-0025">Alternative splicing</keyword>
<keyword id="KW-0225">Disease variant</keyword>
<keyword id="KW-1015">Disulfide bond</keyword>
<keyword id="KW-0887">Epilepsy</keyword>
<keyword id="KW-0325">Glycoprotein</keyword>
<keyword id="KW-0328">Glycosyltransferase</keyword>
<keyword id="KW-0333">Golgi apparatus</keyword>
<keyword id="KW-0991">Intellectual disability</keyword>
<keyword id="KW-0472">Membrane</keyword>
<keyword id="KW-1267">Proteomics identification</keyword>
<keyword id="KW-1185">Reference proteome</keyword>
<keyword id="KW-0964">Secreted</keyword>
<keyword id="KW-0735">Signal-anchor</keyword>
<keyword id="KW-0808">Transferase</keyword>
<keyword id="KW-0812">Transmembrane</keyword>
<keyword id="KW-1133">Transmembrane helix</keyword>
<name>SIAT6_HUMAN</name>
<evidence type="ECO:0000250" key="1"/>
<evidence type="ECO:0000250" key="2">
    <source>
        <dbReference type="UniProtKB" id="P97325"/>
    </source>
</evidence>
<evidence type="ECO:0000255" key="3"/>
<evidence type="ECO:0000269" key="4">
    <source>
    </source>
</evidence>
<evidence type="ECO:0000269" key="5">
    <source>
    </source>
</evidence>
<evidence type="ECO:0000303" key="6">
    <source ref="2"/>
</evidence>
<evidence type="ECO:0000303" key="7">
    <source ref="3"/>
</evidence>
<evidence type="ECO:0000305" key="8"/>
<reference key="1">
    <citation type="journal article" date="1993" name="Biochem. Biophys. Res. Commun.">
        <title>Cloning and expression of human Gal beta 1,3(4)GlcNAc alpha 2,3-sialyltransferase.</title>
        <authorList>
            <person name="Kitagawa H."/>
            <person name="Paulson J.C."/>
        </authorList>
    </citation>
    <scope>NUCLEOTIDE SEQUENCE [MRNA] (ISOFORM B1)</scope>
    <source>
        <tissue>Placenta</tissue>
    </source>
</reference>
<reference key="2">
    <citation type="submission" date="2001-09" db="EMBL/GenBank/DDBJ databases">
        <title>Structural variations of the alpha 2,3-sialyltransferase III, ST3GalIII, transcripts in human peripheral white blood cells.</title>
        <authorList>
            <person name="Grahn A."/>
            <person name="Larson G."/>
        </authorList>
    </citation>
    <scope>NUCLEOTIDE SEQUENCE [MRNA] (ISOFORMS A1; A7; A8; B1; B1-90; B1+32; B3; B4; B4+173; B5+26; B5+173; B7; B8; C1; C7; C8; D2+26; E1 AND E3+32)</scope>
</reference>
<reference key="3">
    <citation type="submission" date="2002-10" db="EMBL/GenBank/DDBJ databases">
        <title>Structural variations of the alpha 2,3-sialyltransferase III, ST3GalIII, transcripts in human fetal brain.</title>
        <authorList>
            <person name="Grahn A."/>
            <person name="Larson G."/>
        </authorList>
    </citation>
    <scope>NUCLEOTIDE SEQUENCE [MRNA] (ISOFORMS B10; C4; C5; C9; C11; C12 AND D5)</scope>
    <source>
        <tissue>Fetal brain</tissue>
    </source>
</reference>
<reference key="4">
    <citation type="journal article" date="2006" name="Nature">
        <title>The DNA sequence and biological annotation of human chromosome 1.</title>
        <authorList>
            <person name="Gregory S.G."/>
            <person name="Barlow K.F."/>
            <person name="McLay K.E."/>
            <person name="Kaul R."/>
            <person name="Swarbreck D."/>
            <person name="Dunham A."/>
            <person name="Scott C.E."/>
            <person name="Howe K.L."/>
            <person name="Woodfine K."/>
            <person name="Spencer C.C.A."/>
            <person name="Jones M.C."/>
            <person name="Gillson C."/>
            <person name="Searle S."/>
            <person name="Zhou Y."/>
            <person name="Kokocinski F."/>
            <person name="McDonald L."/>
            <person name="Evans R."/>
            <person name="Phillips K."/>
            <person name="Atkinson A."/>
            <person name="Cooper R."/>
            <person name="Jones C."/>
            <person name="Hall R.E."/>
            <person name="Andrews T.D."/>
            <person name="Lloyd C."/>
            <person name="Ainscough R."/>
            <person name="Almeida J.P."/>
            <person name="Ambrose K.D."/>
            <person name="Anderson F."/>
            <person name="Andrew R.W."/>
            <person name="Ashwell R.I.S."/>
            <person name="Aubin K."/>
            <person name="Babbage A.K."/>
            <person name="Bagguley C.L."/>
            <person name="Bailey J."/>
            <person name="Beasley H."/>
            <person name="Bethel G."/>
            <person name="Bird C.P."/>
            <person name="Bray-Allen S."/>
            <person name="Brown J.Y."/>
            <person name="Brown A.J."/>
            <person name="Buckley D."/>
            <person name="Burton J."/>
            <person name="Bye J."/>
            <person name="Carder C."/>
            <person name="Chapman J.C."/>
            <person name="Clark S.Y."/>
            <person name="Clarke G."/>
            <person name="Clee C."/>
            <person name="Cobley V."/>
            <person name="Collier R.E."/>
            <person name="Corby N."/>
            <person name="Coville G.J."/>
            <person name="Davies J."/>
            <person name="Deadman R."/>
            <person name="Dunn M."/>
            <person name="Earthrowl M."/>
            <person name="Ellington A.G."/>
            <person name="Errington H."/>
            <person name="Frankish A."/>
            <person name="Frankland J."/>
            <person name="French L."/>
            <person name="Garner P."/>
            <person name="Garnett J."/>
            <person name="Gay L."/>
            <person name="Ghori M.R.J."/>
            <person name="Gibson R."/>
            <person name="Gilby L.M."/>
            <person name="Gillett W."/>
            <person name="Glithero R.J."/>
            <person name="Grafham D.V."/>
            <person name="Griffiths C."/>
            <person name="Griffiths-Jones S."/>
            <person name="Grocock R."/>
            <person name="Hammond S."/>
            <person name="Harrison E.S.I."/>
            <person name="Hart E."/>
            <person name="Haugen E."/>
            <person name="Heath P.D."/>
            <person name="Holmes S."/>
            <person name="Holt K."/>
            <person name="Howden P.J."/>
            <person name="Hunt A.R."/>
            <person name="Hunt S.E."/>
            <person name="Hunter G."/>
            <person name="Isherwood J."/>
            <person name="James R."/>
            <person name="Johnson C."/>
            <person name="Johnson D."/>
            <person name="Joy A."/>
            <person name="Kay M."/>
            <person name="Kershaw J.K."/>
            <person name="Kibukawa M."/>
            <person name="Kimberley A.M."/>
            <person name="King A."/>
            <person name="Knights A.J."/>
            <person name="Lad H."/>
            <person name="Laird G."/>
            <person name="Lawlor S."/>
            <person name="Leongamornlert D.A."/>
            <person name="Lloyd D.M."/>
            <person name="Loveland J."/>
            <person name="Lovell J."/>
            <person name="Lush M.J."/>
            <person name="Lyne R."/>
            <person name="Martin S."/>
            <person name="Mashreghi-Mohammadi M."/>
            <person name="Matthews L."/>
            <person name="Matthews N.S.W."/>
            <person name="McLaren S."/>
            <person name="Milne S."/>
            <person name="Mistry S."/>
            <person name="Moore M.J.F."/>
            <person name="Nickerson T."/>
            <person name="O'Dell C.N."/>
            <person name="Oliver K."/>
            <person name="Palmeiri A."/>
            <person name="Palmer S.A."/>
            <person name="Parker A."/>
            <person name="Patel D."/>
            <person name="Pearce A.V."/>
            <person name="Peck A.I."/>
            <person name="Pelan S."/>
            <person name="Phelps K."/>
            <person name="Phillimore B.J."/>
            <person name="Plumb R."/>
            <person name="Rajan J."/>
            <person name="Raymond C."/>
            <person name="Rouse G."/>
            <person name="Saenphimmachak C."/>
            <person name="Sehra H.K."/>
            <person name="Sheridan E."/>
            <person name="Shownkeen R."/>
            <person name="Sims S."/>
            <person name="Skuce C.D."/>
            <person name="Smith M."/>
            <person name="Steward C."/>
            <person name="Subramanian S."/>
            <person name="Sycamore N."/>
            <person name="Tracey A."/>
            <person name="Tromans A."/>
            <person name="Van Helmond Z."/>
            <person name="Wall M."/>
            <person name="Wallis J.M."/>
            <person name="White S."/>
            <person name="Whitehead S.L."/>
            <person name="Wilkinson J.E."/>
            <person name="Willey D.L."/>
            <person name="Williams H."/>
            <person name="Wilming L."/>
            <person name="Wray P.W."/>
            <person name="Wu Z."/>
            <person name="Coulson A."/>
            <person name="Vaudin M."/>
            <person name="Sulston J.E."/>
            <person name="Durbin R.M."/>
            <person name="Hubbard T."/>
            <person name="Wooster R."/>
            <person name="Dunham I."/>
            <person name="Carter N.P."/>
            <person name="McVean G."/>
            <person name="Ross M.T."/>
            <person name="Harrow J."/>
            <person name="Olson M.V."/>
            <person name="Beck S."/>
            <person name="Rogers J."/>
            <person name="Bentley D.R."/>
        </authorList>
    </citation>
    <scope>NUCLEOTIDE SEQUENCE [LARGE SCALE GENOMIC DNA]</scope>
</reference>
<reference key="5">
    <citation type="submission" date="2005-09" db="EMBL/GenBank/DDBJ databases">
        <authorList>
            <person name="Mural R.J."/>
            <person name="Istrail S."/>
            <person name="Sutton G.G."/>
            <person name="Florea L."/>
            <person name="Halpern A.L."/>
            <person name="Mobarry C.M."/>
            <person name="Lippert R."/>
            <person name="Walenz B."/>
            <person name="Shatkay H."/>
            <person name="Dew I."/>
            <person name="Miller J.R."/>
            <person name="Flanigan M.J."/>
            <person name="Edwards N.J."/>
            <person name="Bolanos R."/>
            <person name="Fasulo D."/>
            <person name="Halldorsson B.V."/>
            <person name="Hannenhalli S."/>
            <person name="Turner R."/>
            <person name="Yooseph S."/>
            <person name="Lu F."/>
            <person name="Nusskern D.R."/>
            <person name="Shue B.C."/>
            <person name="Zheng X.H."/>
            <person name="Zhong F."/>
            <person name="Delcher A.L."/>
            <person name="Huson D.H."/>
            <person name="Kravitz S.A."/>
            <person name="Mouchard L."/>
            <person name="Reinert K."/>
            <person name="Remington K.A."/>
            <person name="Clark A.G."/>
            <person name="Waterman M.S."/>
            <person name="Eichler E.E."/>
            <person name="Adams M.D."/>
            <person name="Hunkapiller M.W."/>
            <person name="Myers E.W."/>
            <person name="Venter J.C."/>
        </authorList>
    </citation>
    <scope>NUCLEOTIDE SEQUENCE [LARGE SCALE GENOMIC DNA]</scope>
</reference>
<reference key="6">
    <citation type="journal article" date="2004" name="Genome Res.">
        <title>The status, quality, and expansion of the NIH full-length cDNA project: the Mammalian Gene Collection (MGC).</title>
        <authorList>
            <consortium name="The MGC Project Team"/>
        </authorList>
    </citation>
    <scope>NUCLEOTIDE SEQUENCE [LARGE SCALE MRNA] (ISOFORM B1)</scope>
    <source>
        <tissue>Brain</tissue>
    </source>
</reference>
<reference key="7">
    <citation type="journal article" date="2011" name="Am. J. Hum. Genet.">
        <title>ST3GAL3 mutations impair the development of higher cognitive functions.</title>
        <authorList>
            <person name="Hu H."/>
            <person name="Eggers K."/>
            <person name="Chen W."/>
            <person name="Garshasbi M."/>
            <person name="Motazacker M.M."/>
            <person name="Wrogemann K."/>
            <person name="Kahrizi K."/>
            <person name="Tzschach A."/>
            <person name="Hosseini M."/>
            <person name="Bahman I."/>
            <person name="Hucho T."/>
            <person name="Muhlenhoff M."/>
            <person name="Gerardy-Schahn R."/>
            <person name="Najmabadi H."/>
            <person name="Ropers H.H."/>
            <person name="Kuss A.W."/>
        </authorList>
    </citation>
    <scope>VARIANTS MRT12 ASP-13 AND TYR-370</scope>
    <scope>CHARACTERIZATION OF VARIANTS MRT12 ASP-13 AND TYR-370</scope>
</reference>
<reference key="8">
    <citation type="journal article" date="2013" name="Epilepsia">
        <title>West syndrome caused by ST3Gal-III deficiency.</title>
        <authorList>
            <person name="Edvardson S."/>
            <person name="Baumann A.M."/>
            <person name="Muehlenhoff M."/>
            <person name="Stephan O."/>
            <person name="Kuss A.W."/>
            <person name="Shaag A."/>
            <person name="He L."/>
            <person name="Zenvirt S."/>
            <person name="Tanzi R."/>
            <person name="Gerardy-Schahn R."/>
            <person name="Elpeleg O."/>
        </authorList>
    </citation>
    <scope>VARIANT DEE15 PRO-320</scope>
    <scope>CHARACTERIZATION OF VARIANT DEE15 PRO-320</scope>
</reference>